<protein>
    <recommendedName>
        <fullName>Basic helix-loop-helix ARNT-like protein 1</fullName>
    </recommendedName>
    <alternativeName>
        <fullName>Aryl hydrocarbon receptor nuclear translocator-like protein 1</fullName>
    </alternativeName>
    <alternativeName>
        <fullName>Brain and muscle ARNT-like 1</fullName>
    </alternativeName>
    <alternativeName>
        <fullName>Tic</fullName>
    </alternativeName>
</protein>
<accession>Q9EPW1</accession>
<accession>O88337</accession>
<accession>O88810</accession>
<accession>Q499M8</accession>
<comment type="function">
    <text evidence="1 2 6 7">Transcriptional activator which forms a core component of the circadian clock. The circadian clock, an internal time-keeping system, regulates various physiological processes through the generation of approximately 24 hour circadian rhythms in gene expression, which are translated into rhythms in metabolism and behavior. It is derived from the Latin roots 'circa' (about) and 'diem' (day) and acts as an important regulator of a wide array of physiological functions including metabolism, sleep, body temperature, blood pressure, endocrine, immune, cardiovascular, and renal function. Consists of two major components: the central clock, residing in the suprachiasmatic nucleus (SCN) of the brain, and the peripheral clocks that are present in nearly every tissue and organ system. Both the central and peripheral clocks can be reset by environmental cues, also known as Zeitgebers (German for 'timegivers'). The predominant Zeitgeber for the central clock is light, which is sensed by retina and signals directly to the SCN. The central clock entrains the peripheral clocks through neuronal and hormonal signals, body temperature and feeding-related cues, aligning all clocks with the external light/dark cycle. Circadian rhythms allow an organism to achieve temporal homeostasis with its environment at the molecular level by regulating gene expression to create a peak of protein expression once every 24 hours to control when a particular physiological process is most active with respect to the solar day. Transcription and translation of core clock components (CLOCK, NPAS2, BMAL1, BMAL2, PER1, PER2, PER3, CRY1 and CRY2) plays a critical role in rhythm generation, whereas delays imposed by post-translational modifications (PTMs) are important for determining the period (tau) of the rhythms (tau refers to the period of a rhythm and is the length, in time, of one complete cycle). A diurnal rhythm is synchronized with the day/night cycle, while the ultradian and infradian rhythms have a period shorter and longer than 24 hours, respectively. Disruptions in the circadian rhythms contribute to the pathology of cardiovascular diseases, cancer, metabolic syndromes and aging. A transcription/translation feedback loop (TTFL) forms the core of the molecular circadian clock mechanism. Transcription factors, CLOCK or NPAS2 and BMAL1 or BMAL2, form the positive limb of the feedback loop, act in the form of a heterodimer and activate the transcription of core clock genes and clock-controlled genes (involved in key metabolic processes), harboring E-box elements (5'-CACGTG-3') within their promoters. The core clock genes: PER1/2/3 and CRY1/2 which are transcriptional repressors form the negative limb of the feedback loop and interact with the CLOCK|NPAS2-BMAL1|BMAL2 heterodimer inhibiting its activity and thereby negatively regulating their own expression. This heterodimer also activates nuclear receptors NR1D1/2 and RORA/B/G, which form a second feedback loop and which activate and repress BMAL1 transcription, respectively. BMAL1 positively regulates myogenesis and negatively regulates adipogenesis via the transcriptional control of the genes of the canonical Wnt signaling pathway. Plays a role in normal pancreatic beta-cell function; regulates glucose-stimulated insulin secretion via the regulation of antioxidant genes NFE2L2/NRF2 and its targets SESN2, PRDX3, CCLC and CCLM. Negatively regulates the mTORC1 signaling pathway; regulates the expression of MTOR and DEPTOR. Controls diurnal oscillations of Ly6C inflammatory monocytes; rhythmic recruitment of the PRC2 complex imparts diurnal variation to chemokine expression that is necessary to sustain Ly6C monocyte rhythms. Regulates the expression of HSD3B2, STAR, PTGS2, CYP11A1, CYP19A1 and LHCGR in the ovary and also the genes involved in hair growth. Plays an important role in adult hippocampal neurogenesis by regulating the timely entry of neural stem/progenitor cells (NSPCs) into the cell cycle and the number of cell divisions that take place prior to cell-cycle exit. Regulates the circadian expression of CIART and KLF11. The CLOCK-BMAL1 heterodimer regulates the circadian expression of SERPINE1/PAI1, VWF, B3, CCRN4L/NOC, NAMPT, DBP, MYOD1, PPARGC1A, PPARGC1B, SIRT1, GYS2, F7, NGFR, GNRHR, BHLHE40/DEC1, ATF4, MTA1, KLF10 and also genes implicated in glucose and lipid metabolism. Promotes rhythmic chromatin opening, regulating the DNA accessibility of other transcription factors. May play a role in spermatogenesis; contributes to the chromatoid body assembly and physiology. The NPAS2-BMAL1 heterodimer positively regulates the expression of MAOA, F7 and LDHA and modulates the circadian rhythm of daytime contrast sensitivity by regulating the rhythmic expression of adenylate cyclase type 1 (ADCY1) in the retina. The preferred binding motif for the CLOCK-BMAL1 heterodimer is 5'-CACGTGA-3', which contains a flanking adenine nucleotide at the 3-prime end of the canonical 6-nucleotide E-box sequence (By similarity). CLOCK specifically binds to the half-site 5'-CAC-3', while BMAL1 binds to the half-site 5'-GTGA-3' (By similarity). The CLOCK-BMAL1 heterodimer also recognizes the non-canonical E-box motifs 5'-AACGTGA-3' and 5'-CATGTGA-3'. Essential for the rhythmic interaction of CLOCK with ASS1 and plays a critical role in positively regulating CLOCK-mediated acetylation of ASS1 (By similarity). Plays a role in protecting against lethal sepsis by limiting the expression of immune checkpoint protein CD274 in macrophages in a PKM2-dependent manner (By similarity). Regulates the diurnal rhythms of skeletal muscle metabolism via transcriptional activation of genes promoting triglyceride synthesis (DGAT2) and metabolic efficiency (COQ10B) (By similarity).</text>
</comment>
<comment type="subunit">
    <text evidence="1 2">Component of the circadian clock oscillator which includes the CRY1/2 proteins, CLOCK or NPAS2, BMAL1 or BMAL2, CSNK1D and/or CSNK1E, TIMELESS and the PER1/2/3 proteins (By similarity). Forms a heterodimer with CLOCK (By similarity). The CLOCK-BMAL1 heterodimer is required for E-box-dependent transactivation, for CLOCK nuclear translocation and degradation, and, for phosphorylation of both CLOCK and BMAL1 (By similarity). Part of a nuclear complex which also includes RACK1 and PRKCA; RACK1 and PRKCA are recruited to the complex in a circadian manner (By similarity). Interacts with NPAS2 (By similarity). Interacts with EZH2 (By similarity). Interacts with SUMO3 (By similarity). Interacts with SIRT1 (By similarity). Interacts with AHR (By similarity). Interacts with ID1, ID2 and ID3 (By similarity). Interacts with DDX4 (By similarity). Interacts with OGT (By similarity). Interacts with EED and SUZ12 (By similarity). Interacts with MTA1 (By similarity). Interacts with CIART (By similarity). Interacts with HSP90 (By similarity). Interacts with KAT2B and EP300 (By similarity). Interacts with BHLHE40/DEC1 and BHLHE41/DEC2 (By similarity). Interacts with RELB and the interaction is enhanced in the presence of CLOCK (By similarity). Interacts with PER1, PER2, CRY1 and CRY2 and this interaction requires a translocation to the nucleus (By similarity). Interaction of the CLOCK-BMAL1 heterodimer with PER or CRY inhibits transcription activation (By similarity). Interaction of the CLOCK-BMAL1 with CRY1 is independent of DNA but with PER2 is off DNA (By similarity). The CLOCK-BMAL1 heterodimer interacts with GSK3B (By similarity). Interacts with KDM5A (By similarity). Interacts with KMT2A; in a circadian manner (By similarity). Interacts with UBE3A (By similarity). Interacts with PRKCG (By similarity). Interacts with MAGEL2 (By similarity). Interacts with NCOA2 (By similarity). Interacts with THRAP3 (By similarity). The CLOCK-BMAL1 heterodimer interacts with PASD1 (By similarity). Interacts with PASD1 (By similarity). Interacts with USP9X (By similarity). Interacts with PIWIL2 (via PIWI domain) (By similarity). Interacts with HDAC3 (By similarity). Interacts with HNF4A (By similarity).</text>
</comment>
<comment type="subcellular location">
    <subcellularLocation>
        <location evidence="4 6">Nucleus</location>
    </subcellularLocation>
    <subcellularLocation>
        <location evidence="2">Cytoplasm</location>
    </subcellularLocation>
    <subcellularLocation>
        <location evidence="2">Nucleus</location>
        <location evidence="2">PML body</location>
    </subcellularLocation>
    <text evidence="2">Shuttles between the nucleus and the cytoplasm and this nucleocytoplasmic shuttling is essential for the nuclear accumulation of CLOCK, target gene transcription and the degradation of the CLOCK-BMAL1 heterodimer. The sumoylated form localizes in the PML body. Sequestered to the cytoplasm in the presence of ID2.</text>
</comment>
<comment type="alternative products">
    <event type="alternative splicing"/>
    <isoform>
        <id>Q9EPW1-1</id>
        <name>1</name>
        <name>b</name>
        <sequence type="displayed"/>
    </isoform>
    <isoform>
        <id>Q9EPW1-2</id>
        <name>2</name>
        <sequence type="described" ref="VSP_007997"/>
    </isoform>
    <isoform>
        <id>Q9EPW1-3</id>
        <name>3</name>
        <name>g'</name>
        <sequence type="described" ref="VSP_007998 VSP_007999"/>
    </isoform>
</comment>
<comment type="PTM">
    <text evidence="2">Ubiquitinated, leading to its proteasomal degradation. Deubiquitinated by USP9X.</text>
</comment>
<comment type="PTM">
    <text evidence="2">O-glycosylated; contains O-GlcNAc. O-glycosylation by OGT prevents protein degradation by inhibiting ubiquitination. It also stabilizes the CLOCK-BMAL1 heterodimer thereby increasing CLOCK-BMAL1-mediated transcription of genes in the negative loop of the circadian clock such as PER1/2/3 and CRY1/2.</text>
</comment>
<comment type="PTM">
    <text evidence="2">Acetylated on Lys-538 by CLOCK during the repression phase of the circadian cycle. Acetylation facilitates recruitment of CRY1 protein and initiates the repression phase of the circadian cycle. Acetylated at Lys-538 by KAT5 during the activation phase of the cycle, leading to recruitment of the positive transcription elongation factor b (P-TEFb) and BRD4, followed by productive elongation of circadian transcripts. Deacetylated by SIRT1, which may result in decreased protein stability.</text>
</comment>
<comment type="PTM">
    <text evidence="1 2">Phosphorylated upon dimerization with CLOCK. Phosphorylation enhances the transcriptional activity, alters the subcellular localization and decreases the stability of the CLOCK-BMAL1 heterodimer by promoting its degradation. Phosphorylation shows circadian variations in the liver with a peak between CT10 to CT14. Phosphorylation at Ser-90 by CK2 is essential for its nuclear localization, its interaction with CLOCK and controls CLOCK nuclear entry. Dephosphorylation at Ser-78 is important for dimerization with CLOCK and transcriptional activity.</text>
</comment>
<comment type="PTM">
    <text evidence="2">Sumoylated on Lys-259 upon dimerization with CLOCK. Predominantly conjugated to poly-SUMO2/3 rather than SUMO1 and the level of these conjugates undergo rhythmic variation, peaking at CT9-CT12. Sumoylation localizes it exclusively to the PML body and promotes its ubiquitination in the PML body, ubiquitin-dependent proteasomal degradation and the transcriptional activity of the CLOCK-BMAL1 heterodimer.</text>
</comment>
<comment type="PTM">
    <text evidence="2">Undergoes lysosome-mediated degradation in a time-dependent manner in the liver.</text>
</comment>
<comment type="sequence caution" evidence="10">
    <conflict type="erroneous initiation">
        <sequence resource="EMBL-CDS" id="AAC21449"/>
    </conflict>
    <text>Truncated N-terminus.</text>
</comment>
<keyword id="KW-0007">Acetylation</keyword>
<keyword id="KW-0010">Activator</keyword>
<keyword id="KW-0025">Alternative splicing</keyword>
<keyword id="KW-0090">Biological rhythms</keyword>
<keyword id="KW-0963">Cytoplasm</keyword>
<keyword id="KW-0238">DNA-binding</keyword>
<keyword id="KW-1017">Isopeptide bond</keyword>
<keyword id="KW-0539">Nucleus</keyword>
<keyword id="KW-0597">Phosphoprotein</keyword>
<keyword id="KW-1185">Reference proteome</keyword>
<keyword id="KW-0677">Repeat</keyword>
<keyword id="KW-0804">Transcription</keyword>
<keyword id="KW-0805">Transcription regulation</keyword>
<keyword id="KW-0832">Ubl conjugation</keyword>
<organism>
    <name type="scientific">Rattus norvegicus</name>
    <name type="common">Rat</name>
    <dbReference type="NCBI Taxonomy" id="10116"/>
    <lineage>
        <taxon>Eukaryota</taxon>
        <taxon>Metazoa</taxon>
        <taxon>Chordata</taxon>
        <taxon>Craniata</taxon>
        <taxon>Vertebrata</taxon>
        <taxon>Euteleostomi</taxon>
        <taxon>Mammalia</taxon>
        <taxon>Eutheria</taxon>
        <taxon>Euarchontoglires</taxon>
        <taxon>Glires</taxon>
        <taxon>Rodentia</taxon>
        <taxon>Myomorpha</taxon>
        <taxon>Muroidea</taxon>
        <taxon>Muridae</taxon>
        <taxon>Murinae</taxon>
        <taxon>Rattus</taxon>
    </lineage>
</organism>
<sequence length="626" mass="68616">MADQRMDISSTISDFMSPGPTDLLSGSLSTSGVDCNRKRKGSATDYQESMDTDKDDPHGRLEYAEHQGRIKNAREAHSQIEKRRRDKMNSFIDELASLVPTCNAMSRKLDKLTVLRMAVQHMKTLRGATNPYTEANYKPTSLSDDELKHLILRAADGFLFVVGCDRGKILFVSESVFKILNYSQNDLIGQSLFDYLHPKDIAKVKEQLSSSDTAPRERLIDAKTGLPVKTDITPGPSRLCSGARRSFFCRMKCNRPSVKVEDKDFASTCSKKKADRKSFCTIHSTGYLKSWPPTKMGLDEDSEPDNEGCNLSCLVAIGRLHSHMVPQPVNGEIRVKSMEYVSRHAIDGKFVFVDQRATAILAYLPQELLGTSCYEYFHQDDIGHLAECHRQVLQTREKITTNCYKFKIKDGSFITLRSRWFSFMNPWTKEVEYIVSTNTVVLANVLEGGDPTFPQLTASPHSMDSMLPSGEGGPKRTHPTVPGIPGGTRAGAGKIGRMIAEEIMEIHRIRGSSPSSCGSSPLNITSTPPPDASSPGGKKILNGGTPDIPSAGLLPGQAQETPGYPYSDSSSILGENPHIGIDMIDNDQGSSSPSNDEAAMAVIMSLLEADAGLGGPVDFSDLPWPL</sequence>
<dbReference type="EMBL" id="AB012600">
    <property type="protein sequence ID" value="BAA33450.1"/>
    <property type="molecule type" value="mRNA"/>
</dbReference>
<dbReference type="EMBL" id="AF015953">
    <property type="protein sequence ID" value="AAC21449.1"/>
    <property type="status" value="ALT_INIT"/>
    <property type="molecule type" value="mRNA"/>
</dbReference>
<dbReference type="EMBL" id="AF317669">
    <property type="protein sequence ID" value="AAG34180.2"/>
    <property type="molecule type" value="mRNA"/>
</dbReference>
<dbReference type="EMBL" id="BC099833">
    <property type="protein sequence ID" value="AAH99833.1"/>
    <property type="molecule type" value="mRNA"/>
</dbReference>
<dbReference type="RefSeq" id="NP_077338.2">
    <property type="nucleotide sequence ID" value="NM_024362.2"/>
</dbReference>
<dbReference type="RefSeq" id="XP_006230091.1">
    <property type="nucleotide sequence ID" value="XM_006230029.3"/>
</dbReference>
<dbReference type="SMR" id="Q9EPW1"/>
<dbReference type="FunCoup" id="Q9EPW1">
    <property type="interactions" value="1667"/>
</dbReference>
<dbReference type="STRING" id="10116.ENSRNOP00000042830"/>
<dbReference type="GlyGen" id="Q9EPW1">
    <property type="glycosylation" value="1 site, 1 O-linked glycan (1 site)"/>
</dbReference>
<dbReference type="PhosphoSitePlus" id="Q9EPW1"/>
<dbReference type="PaxDb" id="10116-ENSRNOP00000042830"/>
<dbReference type="GeneID" id="29657"/>
<dbReference type="KEGG" id="rno:29657"/>
<dbReference type="UCSC" id="RGD:62003">
    <molecule id="Q9EPW1-1"/>
    <property type="organism name" value="rat"/>
</dbReference>
<dbReference type="AGR" id="RGD:62003"/>
<dbReference type="CTD" id="406"/>
<dbReference type="RGD" id="62003">
    <property type="gene designation" value="Bmal1"/>
</dbReference>
<dbReference type="eggNOG" id="KOG3561">
    <property type="taxonomic scope" value="Eukaryota"/>
</dbReference>
<dbReference type="InParanoid" id="Q9EPW1"/>
<dbReference type="OrthoDB" id="71302at2759"/>
<dbReference type="PhylomeDB" id="Q9EPW1"/>
<dbReference type="Reactome" id="R-RNO-9768919">
    <property type="pathway name" value="NPAS4 regulates expression of target genes"/>
</dbReference>
<dbReference type="PRO" id="PR:Q9EPW1"/>
<dbReference type="Proteomes" id="UP000002494">
    <property type="component" value="Unplaced"/>
</dbReference>
<dbReference type="GO" id="GO:0034751">
    <property type="term" value="C:aryl hydrocarbon receptor complex"/>
    <property type="evidence" value="ECO:0000318"/>
    <property type="project" value="GO_Central"/>
</dbReference>
<dbReference type="GO" id="GO:0033391">
    <property type="term" value="C:chromatoid body"/>
    <property type="evidence" value="ECO:0000250"/>
    <property type="project" value="UniProtKB"/>
</dbReference>
<dbReference type="GO" id="GO:1990513">
    <property type="term" value="C:CLOCK-BMAL transcription complex"/>
    <property type="evidence" value="ECO:0000266"/>
    <property type="project" value="RGD"/>
</dbReference>
<dbReference type="GO" id="GO:0005737">
    <property type="term" value="C:cytoplasm"/>
    <property type="evidence" value="ECO:0000266"/>
    <property type="project" value="RGD"/>
</dbReference>
<dbReference type="GO" id="GO:0016604">
    <property type="term" value="C:nuclear body"/>
    <property type="evidence" value="ECO:0000266"/>
    <property type="project" value="RGD"/>
</dbReference>
<dbReference type="GO" id="GO:0005634">
    <property type="term" value="C:nucleus"/>
    <property type="evidence" value="ECO:0000314"/>
    <property type="project" value="UniProtKB"/>
</dbReference>
<dbReference type="GO" id="GO:0016605">
    <property type="term" value="C:PML body"/>
    <property type="evidence" value="ECO:0007669"/>
    <property type="project" value="UniProtKB-SubCell"/>
</dbReference>
<dbReference type="GO" id="GO:0005667">
    <property type="term" value="C:transcription regulator complex"/>
    <property type="evidence" value="ECO:0000250"/>
    <property type="project" value="UniProtKB"/>
</dbReference>
<dbReference type="GO" id="GO:0017162">
    <property type="term" value="F:aryl hydrocarbon receptor binding"/>
    <property type="evidence" value="ECO:0000266"/>
    <property type="project" value="RGD"/>
</dbReference>
<dbReference type="GO" id="GO:0043425">
    <property type="term" value="F:bHLH transcription factor binding"/>
    <property type="evidence" value="ECO:0000266"/>
    <property type="project" value="RGD"/>
</dbReference>
<dbReference type="GO" id="GO:0003677">
    <property type="term" value="F:DNA binding"/>
    <property type="evidence" value="ECO:0000250"/>
    <property type="project" value="UniProtKB"/>
</dbReference>
<dbReference type="GO" id="GO:0001228">
    <property type="term" value="F:DNA-binding transcription activator activity, RNA polymerase II-specific"/>
    <property type="evidence" value="ECO:0000266"/>
    <property type="project" value="RGD"/>
</dbReference>
<dbReference type="GO" id="GO:0003700">
    <property type="term" value="F:DNA-binding transcription factor activity"/>
    <property type="evidence" value="ECO:0000266"/>
    <property type="project" value="RGD"/>
</dbReference>
<dbReference type="GO" id="GO:0000981">
    <property type="term" value="F:DNA-binding transcription factor activity, RNA polymerase II-specific"/>
    <property type="evidence" value="ECO:0000266"/>
    <property type="project" value="RGD"/>
</dbReference>
<dbReference type="GO" id="GO:0140297">
    <property type="term" value="F:DNA-binding transcription factor binding"/>
    <property type="evidence" value="ECO:0000266"/>
    <property type="project" value="RGD"/>
</dbReference>
<dbReference type="GO" id="GO:0070888">
    <property type="term" value="F:E-box binding"/>
    <property type="evidence" value="ECO:0000250"/>
    <property type="project" value="UniProtKB"/>
</dbReference>
<dbReference type="GO" id="GO:0051879">
    <property type="term" value="F:Hsp90 protein binding"/>
    <property type="evidence" value="ECO:0000266"/>
    <property type="project" value="RGD"/>
</dbReference>
<dbReference type="GO" id="GO:0046982">
    <property type="term" value="F:protein heterodimerization activity"/>
    <property type="evidence" value="ECO:0000266"/>
    <property type="project" value="RGD"/>
</dbReference>
<dbReference type="GO" id="GO:0000978">
    <property type="term" value="F:RNA polymerase II cis-regulatory region sequence-specific DNA binding"/>
    <property type="evidence" value="ECO:0000250"/>
    <property type="project" value="UniProtKB"/>
</dbReference>
<dbReference type="GO" id="GO:0043565">
    <property type="term" value="F:sequence-specific DNA binding"/>
    <property type="evidence" value="ECO:0000250"/>
    <property type="project" value="UniProtKB"/>
</dbReference>
<dbReference type="GO" id="GO:1990837">
    <property type="term" value="F:sequence-specific double-stranded DNA binding"/>
    <property type="evidence" value="ECO:0000266"/>
    <property type="project" value="RGD"/>
</dbReference>
<dbReference type="GO" id="GO:0000976">
    <property type="term" value="F:transcription cis-regulatory region binding"/>
    <property type="evidence" value="ECO:0000250"/>
    <property type="project" value="UniProtKB"/>
</dbReference>
<dbReference type="GO" id="GO:0003712">
    <property type="term" value="F:transcription coregulator activity"/>
    <property type="evidence" value="ECO:0000266"/>
    <property type="project" value="RGD"/>
</dbReference>
<dbReference type="GO" id="GO:0006914">
    <property type="term" value="P:autophagy"/>
    <property type="evidence" value="ECO:0000266"/>
    <property type="project" value="RGD"/>
</dbReference>
<dbReference type="GO" id="GO:0032922">
    <property type="term" value="P:circadian regulation of gene expression"/>
    <property type="evidence" value="ECO:0000250"/>
    <property type="project" value="UniProtKB"/>
</dbReference>
<dbReference type="GO" id="GO:0007623">
    <property type="term" value="P:circadian rhythm"/>
    <property type="evidence" value="ECO:0000270"/>
    <property type="project" value="RGD"/>
</dbReference>
<dbReference type="GO" id="GO:0097009">
    <property type="term" value="P:energy homeostasis"/>
    <property type="evidence" value="ECO:0000266"/>
    <property type="project" value="RGD"/>
</dbReference>
<dbReference type="GO" id="GO:0010467">
    <property type="term" value="P:gene expression"/>
    <property type="evidence" value="ECO:0000266"/>
    <property type="project" value="RGD"/>
</dbReference>
<dbReference type="GO" id="GO:0060137">
    <property type="term" value="P:maternal process involved in parturition"/>
    <property type="evidence" value="ECO:0000266"/>
    <property type="project" value="RGD"/>
</dbReference>
<dbReference type="GO" id="GO:0120163">
    <property type="term" value="P:negative regulation of cold-induced thermogenesis"/>
    <property type="evidence" value="ECO:0000250"/>
    <property type="project" value="YuBioLab"/>
</dbReference>
<dbReference type="GO" id="GO:0045892">
    <property type="term" value="P:negative regulation of DNA-templated transcription"/>
    <property type="evidence" value="ECO:0000250"/>
    <property type="project" value="UniProtKB"/>
</dbReference>
<dbReference type="GO" id="GO:0045599">
    <property type="term" value="P:negative regulation of fat cell differentiation"/>
    <property type="evidence" value="ECO:0000250"/>
    <property type="project" value="UniProtKB"/>
</dbReference>
<dbReference type="GO" id="GO:2000323">
    <property type="term" value="P:negative regulation of nuclear receptor-mediated glucocorticoid signaling pathway"/>
    <property type="evidence" value="ECO:0000250"/>
    <property type="project" value="UniProtKB"/>
</dbReference>
<dbReference type="GO" id="GO:0032007">
    <property type="term" value="P:negative regulation of TOR signaling"/>
    <property type="evidence" value="ECO:0000250"/>
    <property type="project" value="UniProtKB"/>
</dbReference>
<dbReference type="GO" id="GO:0090403">
    <property type="term" value="P:oxidative stress-induced premature senescence"/>
    <property type="evidence" value="ECO:0000250"/>
    <property type="project" value="UniProtKB"/>
</dbReference>
<dbReference type="GO" id="GO:0090263">
    <property type="term" value="P:positive regulation of canonical Wnt signaling pathway"/>
    <property type="evidence" value="ECO:0000250"/>
    <property type="project" value="UniProtKB"/>
</dbReference>
<dbReference type="GO" id="GO:0042753">
    <property type="term" value="P:positive regulation of circadian rhythm"/>
    <property type="evidence" value="ECO:0000250"/>
    <property type="project" value="UniProtKB"/>
</dbReference>
<dbReference type="GO" id="GO:0045893">
    <property type="term" value="P:positive regulation of DNA-templated transcription"/>
    <property type="evidence" value="ECO:0000314"/>
    <property type="project" value="UniProtKB"/>
</dbReference>
<dbReference type="GO" id="GO:1901985">
    <property type="term" value="P:positive regulation of protein acetylation"/>
    <property type="evidence" value="ECO:0000250"/>
    <property type="project" value="UniProtKB"/>
</dbReference>
<dbReference type="GO" id="GO:2001016">
    <property type="term" value="P:positive regulation of skeletal muscle cell differentiation"/>
    <property type="evidence" value="ECO:0000250"/>
    <property type="project" value="UniProtKB"/>
</dbReference>
<dbReference type="GO" id="GO:0045944">
    <property type="term" value="P:positive regulation of transcription by RNA polymerase II"/>
    <property type="evidence" value="ECO:0000266"/>
    <property type="project" value="RGD"/>
</dbReference>
<dbReference type="GO" id="GO:0043161">
    <property type="term" value="P:proteasome-mediated ubiquitin-dependent protein catabolic process"/>
    <property type="evidence" value="ECO:0000250"/>
    <property type="project" value="UniProtKB"/>
</dbReference>
<dbReference type="GO" id="GO:0006606">
    <property type="term" value="P:protein import into nucleus"/>
    <property type="evidence" value="ECO:0000266"/>
    <property type="project" value="RGD"/>
</dbReference>
<dbReference type="GO" id="GO:0051726">
    <property type="term" value="P:regulation of cell cycle"/>
    <property type="evidence" value="ECO:0000250"/>
    <property type="project" value="UniProtKB"/>
</dbReference>
<dbReference type="GO" id="GO:2000772">
    <property type="term" value="P:regulation of cellular senescence"/>
    <property type="evidence" value="ECO:0000250"/>
    <property type="project" value="UniProtKB"/>
</dbReference>
<dbReference type="GO" id="GO:0006355">
    <property type="term" value="P:regulation of DNA-templated transcription"/>
    <property type="evidence" value="ECO:0000250"/>
    <property type="project" value="UniProtKB"/>
</dbReference>
<dbReference type="GO" id="GO:0042634">
    <property type="term" value="P:regulation of hair cycle"/>
    <property type="evidence" value="ECO:0000250"/>
    <property type="project" value="UniProtKB"/>
</dbReference>
<dbReference type="GO" id="GO:0050796">
    <property type="term" value="P:regulation of insulin secretion"/>
    <property type="evidence" value="ECO:0000250"/>
    <property type="project" value="UniProtKB"/>
</dbReference>
<dbReference type="GO" id="GO:0050767">
    <property type="term" value="P:regulation of neurogenesis"/>
    <property type="evidence" value="ECO:0000250"/>
    <property type="project" value="UniProtKB"/>
</dbReference>
<dbReference type="GO" id="GO:0042176">
    <property type="term" value="P:regulation of protein catabolic process"/>
    <property type="evidence" value="ECO:0000266"/>
    <property type="project" value="RGD"/>
</dbReference>
<dbReference type="GO" id="GO:0006357">
    <property type="term" value="P:regulation of transcription by RNA polymerase II"/>
    <property type="evidence" value="ECO:0000318"/>
    <property type="project" value="GO_Central"/>
</dbReference>
<dbReference type="GO" id="GO:2000074">
    <property type="term" value="P:regulation of type B pancreatic cell development"/>
    <property type="evidence" value="ECO:0000250"/>
    <property type="project" value="UniProtKB"/>
</dbReference>
<dbReference type="GO" id="GO:0051775">
    <property type="term" value="P:response to redox state"/>
    <property type="evidence" value="ECO:0000250"/>
    <property type="project" value="UniProtKB"/>
</dbReference>
<dbReference type="GO" id="GO:0007283">
    <property type="term" value="P:spermatogenesis"/>
    <property type="evidence" value="ECO:0000250"/>
    <property type="project" value="UniProtKB"/>
</dbReference>
<dbReference type="CDD" id="cd11438">
    <property type="entry name" value="bHLH-PAS_ARNTL_PASD3"/>
    <property type="match status" value="1"/>
</dbReference>
<dbReference type="CDD" id="cd00130">
    <property type="entry name" value="PAS"/>
    <property type="match status" value="2"/>
</dbReference>
<dbReference type="FunFam" id="4.10.280.10:FF:000018">
    <property type="entry name" value="Aryl hydrocarbon receptor nuclear translocator-like protein 1"/>
    <property type="match status" value="1"/>
</dbReference>
<dbReference type="FunFam" id="3.30.450.20:FF:000006">
    <property type="entry name" value="aryl hydrocarbon receptor nuclear translocator-like protein 1"/>
    <property type="match status" value="1"/>
</dbReference>
<dbReference type="FunFam" id="3.30.450.20:FF:000010">
    <property type="entry name" value="Aryl hydrocarbon receptor nuclear translocator-like, isoform CRA_b"/>
    <property type="match status" value="1"/>
</dbReference>
<dbReference type="Gene3D" id="4.10.280.10">
    <property type="entry name" value="Helix-loop-helix DNA-binding domain"/>
    <property type="match status" value="1"/>
</dbReference>
<dbReference type="Gene3D" id="3.30.450.20">
    <property type="entry name" value="PAS domain"/>
    <property type="match status" value="2"/>
</dbReference>
<dbReference type="InterPro" id="IPR011598">
    <property type="entry name" value="bHLH_dom"/>
</dbReference>
<dbReference type="InterPro" id="IPR050933">
    <property type="entry name" value="Circadian_TF"/>
</dbReference>
<dbReference type="InterPro" id="IPR036638">
    <property type="entry name" value="HLH_DNA-bd_sf"/>
</dbReference>
<dbReference type="InterPro" id="IPR001067">
    <property type="entry name" value="Nuc_translocat"/>
</dbReference>
<dbReference type="InterPro" id="IPR001610">
    <property type="entry name" value="PAC"/>
</dbReference>
<dbReference type="InterPro" id="IPR000014">
    <property type="entry name" value="PAS"/>
</dbReference>
<dbReference type="InterPro" id="IPR035965">
    <property type="entry name" value="PAS-like_dom_sf"/>
</dbReference>
<dbReference type="InterPro" id="IPR013767">
    <property type="entry name" value="PAS_fold"/>
</dbReference>
<dbReference type="NCBIfam" id="TIGR00229">
    <property type="entry name" value="sensory_box"/>
    <property type="match status" value="1"/>
</dbReference>
<dbReference type="PANTHER" id="PTHR23042">
    <property type="entry name" value="CIRCADIAN PROTEIN CLOCK/ARNT/BMAL/PAS"/>
    <property type="match status" value="1"/>
</dbReference>
<dbReference type="Pfam" id="PF00010">
    <property type="entry name" value="HLH"/>
    <property type="match status" value="1"/>
</dbReference>
<dbReference type="Pfam" id="PF00989">
    <property type="entry name" value="PAS"/>
    <property type="match status" value="1"/>
</dbReference>
<dbReference type="Pfam" id="PF14598">
    <property type="entry name" value="PAS_11"/>
    <property type="match status" value="1"/>
</dbReference>
<dbReference type="PRINTS" id="PR00785">
    <property type="entry name" value="NCTRNSLOCATR"/>
</dbReference>
<dbReference type="SMART" id="SM00353">
    <property type="entry name" value="HLH"/>
    <property type="match status" value="1"/>
</dbReference>
<dbReference type="SMART" id="SM00086">
    <property type="entry name" value="PAC"/>
    <property type="match status" value="1"/>
</dbReference>
<dbReference type="SMART" id="SM00091">
    <property type="entry name" value="PAS"/>
    <property type="match status" value="2"/>
</dbReference>
<dbReference type="SUPFAM" id="SSF47459">
    <property type="entry name" value="HLH, helix-loop-helix DNA-binding domain"/>
    <property type="match status" value="1"/>
</dbReference>
<dbReference type="SUPFAM" id="SSF55785">
    <property type="entry name" value="PYP-like sensor domain (PAS domain)"/>
    <property type="match status" value="2"/>
</dbReference>
<dbReference type="PROSITE" id="PS50888">
    <property type="entry name" value="BHLH"/>
    <property type="match status" value="1"/>
</dbReference>
<dbReference type="PROSITE" id="PS50112">
    <property type="entry name" value="PAS"/>
    <property type="match status" value="2"/>
</dbReference>
<proteinExistence type="evidence at transcript level"/>
<gene>
    <name evidence="11" type="primary">Bmal1</name>
    <name type="synonym">Arntl</name>
    <name type="synonym">Tic</name>
</gene>
<reference key="1">
    <citation type="journal article" date="1998" name="Biochem. Biophys. Res. Commun.">
        <title>Circadian oscillation of BMAL1, a partner of a mammalian clock gene clock, in rat suprachiasmatic nucleus.</title>
        <authorList>
            <person name="Honma S."/>
            <person name="Ikeda M."/>
            <person name="Abe H."/>
            <person name="Tanahashi Y."/>
            <person name="Namihira M."/>
            <person name="Honma K."/>
            <person name="Nomura M."/>
        </authorList>
    </citation>
    <scope>NUCLEOTIDE SEQUENCE [MRNA] (ISOFORM 1)</scope>
    <source>
        <tissue>Brain</tissue>
    </source>
</reference>
<reference key="2">
    <citation type="journal article" date="1998" name="Mamm. Genome">
        <title>Cloning and chromosomal localization of a new member of the bHLH/PAS transcription factor family.</title>
        <authorList>
            <person name="Wolting C.D."/>
            <person name="McGlade C.J."/>
        </authorList>
    </citation>
    <scope>NUCLEOTIDE SEQUENCE [MRNA] (ISOFORM 2)</scope>
    <source>
        <tissue>Brain</tissue>
    </source>
</reference>
<reference key="3">
    <citation type="submission" date="2001-09" db="EMBL/GenBank/DDBJ databases">
        <title>Sequence of Rat BMAL1g' cDNA.</title>
        <authorList>
            <person name="Jac M."/>
            <person name="Sladek M."/>
            <person name="Sauman I."/>
        </authorList>
    </citation>
    <scope>NUCLEOTIDE SEQUENCE [MRNA] (ISOFORM 3)</scope>
    <source>
        <strain>Wistar</strain>
        <tissue>Brain</tissue>
    </source>
</reference>
<reference key="4">
    <citation type="journal article" date="2004" name="Genome Res.">
        <title>The status, quality, and expansion of the NIH full-length cDNA project: the Mammalian Gene Collection (MGC).</title>
        <authorList>
            <consortium name="The MGC Project Team"/>
        </authorList>
    </citation>
    <scope>NUCLEOTIDE SEQUENCE [LARGE SCALE MRNA] (ISOFORM 1)</scope>
    <source>
        <tissue>Prostate</tissue>
    </source>
</reference>
<reference key="5">
    <citation type="journal article" date="2012" name="J. Neuroendocrinol.">
        <title>Thyroid transcription factor 1, a homeodomain containing transcription factor, contributes to regulating periodic oscillations in GnRH gene expression.</title>
        <authorList>
            <person name="Matagne V."/>
            <person name="Kim J.G."/>
            <person name="Ryu B.J."/>
            <person name="Hur M.K."/>
            <person name="Kim M.S."/>
            <person name="Kim K."/>
            <person name="Park B.S."/>
            <person name="Damante G."/>
            <person name="Smiley G."/>
            <person name="Lee B.J."/>
            <person name="Ojeda S.R."/>
        </authorList>
    </citation>
    <scope>FUNCTION</scope>
    <scope>SUBCELLULAR LOCATION</scope>
</reference>
<reference key="6">
    <citation type="journal article" date="2013" name="Am. J. Physiol.">
        <title>Downregulation of core clock gene Bmal1 attenuates expression of progesterone and prostaglandin biosynthesis-related genes in rat luteinizing granulosa cells.</title>
        <authorList>
            <person name="Chen H."/>
            <person name="Zhao L."/>
            <person name="Kumazawa M."/>
            <person name="Yamauchi N."/>
            <person name="Shigeyoshi Y."/>
            <person name="Hashimoto S."/>
            <person name="Hattori M.A."/>
        </authorList>
    </citation>
    <scope>FUNCTION</scope>
</reference>
<name>BMAL1_RAT</name>
<evidence type="ECO:0000250" key="1">
    <source>
        <dbReference type="UniProtKB" id="O00327"/>
    </source>
</evidence>
<evidence type="ECO:0000250" key="2">
    <source>
        <dbReference type="UniProtKB" id="Q9WTL8"/>
    </source>
</evidence>
<evidence type="ECO:0000255" key="3">
    <source>
        <dbReference type="PROSITE-ProRule" id="PRU00140"/>
    </source>
</evidence>
<evidence type="ECO:0000255" key="4">
    <source>
        <dbReference type="PROSITE-ProRule" id="PRU00981"/>
    </source>
</evidence>
<evidence type="ECO:0000256" key="5">
    <source>
        <dbReference type="SAM" id="MobiDB-lite"/>
    </source>
</evidence>
<evidence type="ECO:0000269" key="6">
    <source>
    </source>
</evidence>
<evidence type="ECO:0000269" key="7">
    <source>
    </source>
</evidence>
<evidence type="ECO:0000303" key="8">
    <source>
    </source>
</evidence>
<evidence type="ECO:0000303" key="9">
    <source ref="3"/>
</evidence>
<evidence type="ECO:0000305" key="10"/>
<evidence type="ECO:0000312" key="11">
    <source>
        <dbReference type="RGD" id="62003"/>
    </source>
</evidence>
<feature type="chain" id="PRO_0000127159" description="Basic helix-loop-helix ARNT-like protein 1">
    <location>
        <begin position="1"/>
        <end position="626"/>
    </location>
</feature>
<feature type="domain" description="bHLH" evidence="4">
    <location>
        <begin position="72"/>
        <end position="125"/>
    </location>
</feature>
<feature type="domain" description="PAS 1" evidence="3">
    <location>
        <begin position="143"/>
        <end position="215"/>
    </location>
</feature>
<feature type="domain" description="PAS 2" evidence="3">
    <location>
        <begin position="326"/>
        <end position="396"/>
    </location>
</feature>
<feature type="domain" description="PAC">
    <location>
        <begin position="401"/>
        <end position="444"/>
    </location>
</feature>
<feature type="region of interest" description="Disordered" evidence="5">
    <location>
        <begin position="1"/>
        <end position="58"/>
    </location>
</feature>
<feature type="region of interest" description="Disordered" evidence="5">
    <location>
        <begin position="459"/>
        <end position="492"/>
    </location>
</feature>
<feature type="region of interest" description="Interaction with CIART" evidence="2">
    <location>
        <begin position="508"/>
        <end position="588"/>
    </location>
</feature>
<feature type="region of interest" description="Disordered" evidence="5">
    <location>
        <begin position="511"/>
        <end position="595"/>
    </location>
</feature>
<feature type="short sequence motif" description="Nuclear localization signal" evidence="2">
    <location>
        <begin position="36"/>
        <end position="41"/>
    </location>
</feature>
<feature type="short sequence motif" description="Nuclear export signal 1" evidence="2">
    <location>
        <begin position="142"/>
        <end position="152"/>
    </location>
</feature>
<feature type="short sequence motif" description="Nuclear export signal 2" evidence="2">
    <location>
        <begin position="361"/>
        <end position="369"/>
    </location>
</feature>
<feature type="compositionally biased region" description="Low complexity" evidence="5">
    <location>
        <begin position="17"/>
        <end position="32"/>
    </location>
</feature>
<feature type="compositionally biased region" description="Low complexity" evidence="5">
    <location>
        <begin position="511"/>
        <end position="521"/>
    </location>
</feature>
<feature type="site" description="Interaction with E-box DNA" evidence="1">
    <location>
        <position position="77"/>
    </location>
</feature>
<feature type="site" description="Interaction with E-box DNA" evidence="1">
    <location>
        <position position="80"/>
    </location>
</feature>
<feature type="site" description="Interaction with E-box DNA" evidence="1">
    <location>
        <position position="81"/>
    </location>
</feature>
<feature type="site" description="Interaction with E-box DNA" evidence="1">
    <location>
        <position position="85"/>
    </location>
</feature>
<feature type="site" description="Important for interaction with CLOCK" evidence="1">
    <location>
        <position position="125"/>
    </location>
</feature>
<feature type="modified residue" description="Phosphoserine; by GSK3-beta" evidence="2">
    <location>
        <position position="17"/>
    </location>
</feature>
<feature type="modified residue" description="Phosphothreonine; by GSK3-beta" evidence="2">
    <location>
        <position position="21"/>
    </location>
</feature>
<feature type="modified residue" description="Phosphoserine" evidence="1">
    <location>
        <position position="78"/>
    </location>
</feature>
<feature type="modified residue" description="Phosphoserine; by CK2" evidence="2">
    <location>
        <position position="90"/>
    </location>
</feature>
<feature type="modified residue" description="N6-acetyllysine" evidence="2">
    <location>
        <position position="538"/>
    </location>
</feature>
<feature type="cross-link" description="Glycyl lysine isopeptide (Lys-Gly) (interchain with G-Cter in SUMO2 and SUMO3)" evidence="2">
    <location>
        <position position="252"/>
    </location>
</feature>
<feature type="cross-link" description="Glycyl lysine isopeptide (Lys-Gly) (interchain with G-Cter in SUMO); alternate" evidence="2">
    <location>
        <position position="259"/>
    </location>
</feature>
<feature type="cross-link" description="Glycyl lysine isopeptide (Lys-Gly) (interchain with G-Cter in SUMO2); alternate" evidence="1">
    <location>
        <position position="259"/>
    </location>
</feature>
<feature type="splice variant" id="VSP_007998" description="In isoform 3." evidence="9">
    <original>AADGFLFVVGCDRGKILFVSESVFKILNYSQNDLIGQSLFDYLHPKDIAKVKEQLSSSDTAPRERLIDAKTGLPVKTDITPGPSRLCSGARRSFFCRMKCNRPSVKVEDK</original>
    <variation>DVTEGRSSLSPNLSSRSSIIARMTLLARVCSTTCIQKILPKLRNSYLPRTLHLGSSRSSIIARMTLLARVCSTTCIQKILPKLRNSYLPRTLHLGSDSSMRRLDFRLKRI</variation>
    <location>
        <begin position="154"/>
        <end position="263"/>
    </location>
</feature>
<feature type="splice variant" id="VSP_007997" description="In isoform 2." evidence="8">
    <location>
        <begin position="154"/>
        <end position="184"/>
    </location>
</feature>
<feature type="splice variant" id="VSP_007999" description="In isoform 3." evidence="9">
    <location>
        <begin position="264"/>
        <end position="626"/>
    </location>
</feature>
<feature type="sequence conflict" description="In Ref. 2; AAC21449, 3; AAG34180 and 4; AAH99833." evidence="10" ref="2 3 4">
    <original>S</original>
    <variation>F</variation>
    <location>
        <position position="141"/>
    </location>
</feature>
<feature type="sequence conflict" description="In Ref. 1; BAA33450." evidence="10" ref="1">
    <original>E</original>
    <variation>G</variation>
    <location>
        <position position="505"/>
    </location>
</feature>
<feature type="sequence conflict" description="In Ref. 1; BAA33450." evidence="10" ref="1">
    <original>I</original>
    <variation>T</variation>
    <location>
        <position position="603"/>
    </location>
</feature>